<organism>
    <name type="scientific">Exiguobacterium sp. (strain ATCC BAA-1283 / AT1b)</name>
    <dbReference type="NCBI Taxonomy" id="360911"/>
    <lineage>
        <taxon>Bacteria</taxon>
        <taxon>Bacillati</taxon>
        <taxon>Bacillota</taxon>
        <taxon>Bacilli</taxon>
        <taxon>Bacillales</taxon>
        <taxon>Bacillales Family XII. Incertae Sedis</taxon>
        <taxon>Exiguobacterium</taxon>
    </lineage>
</organism>
<comment type="function">
    <text evidence="1">Could be involved in septation.</text>
</comment>
<comment type="similarity">
    <text evidence="1">Belongs to the SpoVG family.</text>
</comment>
<reference key="1">
    <citation type="journal article" date="2011" name="J. Bacteriol.">
        <title>Complete genome sequence of the Thermophilic Bacterium Exiguobacterium sp. AT1b.</title>
        <authorList>
            <person name="Vishnivetskaya T.A."/>
            <person name="Lucas S."/>
            <person name="Copeland A."/>
            <person name="Lapidus A."/>
            <person name="Glavina del Rio T."/>
            <person name="Dalin E."/>
            <person name="Tice H."/>
            <person name="Bruce D.C."/>
            <person name="Goodwin L.A."/>
            <person name="Pitluck S."/>
            <person name="Saunders E."/>
            <person name="Brettin T."/>
            <person name="Detter C."/>
            <person name="Han C."/>
            <person name="Larimer F."/>
            <person name="Land M.L."/>
            <person name="Hauser L.J."/>
            <person name="Kyrpides N.C."/>
            <person name="Ovchinnikova G."/>
            <person name="Kathariou S."/>
            <person name="Ramaley R.F."/>
            <person name="Rodrigues D.F."/>
            <person name="Hendrix C."/>
            <person name="Richardson P."/>
            <person name="Tiedje J.M."/>
        </authorList>
    </citation>
    <scope>NUCLEOTIDE SEQUENCE [LARGE SCALE GENOMIC DNA]</scope>
    <source>
        <strain>ATCC BAA-1283 / AT1b</strain>
    </source>
</reference>
<name>SP5G_EXISA</name>
<gene>
    <name evidence="1" type="primary">spoVG</name>
    <name type="ordered locus">EAT1b_1689</name>
</gene>
<sequence>MQITDVKIRKVATEGRMKALASITLDHEFVVHDLRIIEGSSGLFVAMPSKRTPEGIFRDIAHPINGEMRQKVEAAVLETYSNMDVEILDPQHVSYGTHE</sequence>
<proteinExistence type="inferred from homology"/>
<feature type="chain" id="PRO_1000213100" description="Putative septation protein SpoVG">
    <location>
        <begin position="1"/>
        <end position="99"/>
    </location>
</feature>
<evidence type="ECO:0000255" key="1">
    <source>
        <dbReference type="HAMAP-Rule" id="MF_00819"/>
    </source>
</evidence>
<dbReference type="EMBL" id="CP001615">
    <property type="protein sequence ID" value="ACQ70615.1"/>
    <property type="molecule type" value="Genomic_DNA"/>
</dbReference>
<dbReference type="RefSeq" id="WP_012727733.1">
    <property type="nucleotide sequence ID" value="NC_012673.1"/>
</dbReference>
<dbReference type="SMR" id="C4KZV2"/>
<dbReference type="STRING" id="360911.EAT1b_1689"/>
<dbReference type="GeneID" id="94370682"/>
<dbReference type="KEGG" id="eat:EAT1b_1689"/>
<dbReference type="eggNOG" id="COG2088">
    <property type="taxonomic scope" value="Bacteria"/>
</dbReference>
<dbReference type="HOGENOM" id="CLU_103669_2_1_9"/>
<dbReference type="OrthoDB" id="9796286at2"/>
<dbReference type="Proteomes" id="UP000000716">
    <property type="component" value="Chromosome"/>
</dbReference>
<dbReference type="GO" id="GO:0000917">
    <property type="term" value="P:division septum assembly"/>
    <property type="evidence" value="ECO:0007669"/>
    <property type="project" value="UniProtKB-KW"/>
</dbReference>
<dbReference type="GO" id="GO:0030435">
    <property type="term" value="P:sporulation resulting in formation of a cellular spore"/>
    <property type="evidence" value="ECO:0007669"/>
    <property type="project" value="InterPro"/>
</dbReference>
<dbReference type="Gene3D" id="3.30.1120.40">
    <property type="entry name" value="Stage V sporulation protein G"/>
    <property type="match status" value="1"/>
</dbReference>
<dbReference type="HAMAP" id="MF_00819">
    <property type="entry name" value="SpoVG"/>
    <property type="match status" value="1"/>
</dbReference>
<dbReference type="InterPro" id="IPR007170">
    <property type="entry name" value="SpoVG"/>
</dbReference>
<dbReference type="InterPro" id="IPR036751">
    <property type="entry name" value="SpoVG_sf"/>
</dbReference>
<dbReference type="NCBIfam" id="NF009749">
    <property type="entry name" value="PRK13259.1"/>
    <property type="match status" value="1"/>
</dbReference>
<dbReference type="PANTHER" id="PTHR38429">
    <property type="entry name" value="SEPTATION PROTEIN SPOVG-RELATED"/>
    <property type="match status" value="1"/>
</dbReference>
<dbReference type="PANTHER" id="PTHR38429:SF1">
    <property type="entry name" value="SEPTATION PROTEIN SPOVG-RELATED"/>
    <property type="match status" value="1"/>
</dbReference>
<dbReference type="Pfam" id="PF04026">
    <property type="entry name" value="SpoVG"/>
    <property type="match status" value="1"/>
</dbReference>
<dbReference type="SUPFAM" id="SSF160537">
    <property type="entry name" value="SpoVG-like"/>
    <property type="match status" value="1"/>
</dbReference>
<protein>
    <recommendedName>
        <fullName evidence="1">Putative septation protein SpoVG</fullName>
    </recommendedName>
</protein>
<accession>C4KZV2</accession>
<keyword id="KW-0131">Cell cycle</keyword>
<keyword id="KW-0132">Cell division</keyword>
<keyword id="KW-0717">Septation</keyword>